<feature type="chain" id="PRO_0000128069" description="Uncharacterized protein AF_1870">
    <location>
        <begin position="1"/>
        <end position="116"/>
    </location>
</feature>
<dbReference type="EMBL" id="AE000782">
    <property type="protein sequence ID" value="AAB89385.1"/>
    <property type="molecule type" value="Genomic_DNA"/>
</dbReference>
<dbReference type="PIR" id="E69483">
    <property type="entry name" value="E69483"/>
</dbReference>
<dbReference type="SMR" id="O28409"/>
<dbReference type="STRING" id="224325.AF_1870"/>
<dbReference type="PaxDb" id="224325-AF_1870"/>
<dbReference type="EnsemblBacteria" id="AAB89385">
    <property type="protein sequence ID" value="AAB89385"/>
    <property type="gene ID" value="AF_1870"/>
</dbReference>
<dbReference type="KEGG" id="afu:AF_1870"/>
<dbReference type="eggNOG" id="arCOG06143">
    <property type="taxonomic scope" value="Archaea"/>
</dbReference>
<dbReference type="HOGENOM" id="CLU_2190999_0_0_2"/>
<dbReference type="OrthoDB" id="372015at2157"/>
<dbReference type="Proteomes" id="UP000002199">
    <property type="component" value="Chromosome"/>
</dbReference>
<dbReference type="CDD" id="cd09653">
    <property type="entry name" value="Csa5_I-A"/>
    <property type="match status" value="1"/>
</dbReference>
<dbReference type="Gene3D" id="1.20.120.1610">
    <property type="match status" value="1"/>
</dbReference>
<dbReference type="InterPro" id="IPR010157">
    <property type="entry name" value="CRISPR-assoc_Cas5"/>
</dbReference>
<dbReference type="NCBIfam" id="TIGR01878">
    <property type="entry name" value="cas_Csa5"/>
    <property type="match status" value="1"/>
</dbReference>
<accession>O28409</accession>
<sequence length="116" mass="12957">MSSTMSFDNLAKVLAVLVAEQGSYTYVDKLGYVPSKDLAVFYLKEALRDLHSIQQKEKFENEKARELVGKIDYERVEKELEDIAKTDERKELREKTSLIAAKALALSAKLGGGSGE</sequence>
<keyword id="KW-1185">Reference proteome</keyword>
<organism>
    <name type="scientific">Archaeoglobus fulgidus (strain ATCC 49558 / DSM 4304 / JCM 9628 / NBRC 100126 / VC-16)</name>
    <dbReference type="NCBI Taxonomy" id="224325"/>
    <lineage>
        <taxon>Archaea</taxon>
        <taxon>Methanobacteriati</taxon>
        <taxon>Methanobacteriota</taxon>
        <taxon>Archaeoglobi</taxon>
        <taxon>Archaeoglobales</taxon>
        <taxon>Archaeoglobaceae</taxon>
        <taxon>Archaeoglobus</taxon>
    </lineage>
</organism>
<name>Y1870_ARCFU</name>
<gene>
    <name type="ordered locus">AF_1870</name>
</gene>
<reference key="1">
    <citation type="journal article" date="1997" name="Nature">
        <title>The complete genome sequence of the hyperthermophilic, sulphate-reducing archaeon Archaeoglobus fulgidus.</title>
        <authorList>
            <person name="Klenk H.-P."/>
            <person name="Clayton R.A."/>
            <person name="Tomb J.-F."/>
            <person name="White O."/>
            <person name="Nelson K.E."/>
            <person name="Ketchum K.A."/>
            <person name="Dodson R.J."/>
            <person name="Gwinn M.L."/>
            <person name="Hickey E.K."/>
            <person name="Peterson J.D."/>
            <person name="Richardson D.L."/>
            <person name="Kerlavage A.R."/>
            <person name="Graham D.E."/>
            <person name="Kyrpides N.C."/>
            <person name="Fleischmann R.D."/>
            <person name="Quackenbush J."/>
            <person name="Lee N.H."/>
            <person name="Sutton G.G."/>
            <person name="Gill S.R."/>
            <person name="Kirkness E.F."/>
            <person name="Dougherty B.A."/>
            <person name="McKenney K."/>
            <person name="Adams M.D."/>
            <person name="Loftus B.J."/>
            <person name="Peterson S.N."/>
            <person name="Reich C.I."/>
            <person name="McNeil L.K."/>
            <person name="Badger J.H."/>
            <person name="Glodek A."/>
            <person name="Zhou L."/>
            <person name="Overbeek R."/>
            <person name="Gocayne J.D."/>
            <person name="Weidman J.F."/>
            <person name="McDonald L.A."/>
            <person name="Utterback T.R."/>
            <person name="Cotton M.D."/>
            <person name="Spriggs T."/>
            <person name="Artiach P."/>
            <person name="Kaine B.P."/>
            <person name="Sykes S.M."/>
            <person name="Sadow P.W."/>
            <person name="D'Andrea K.P."/>
            <person name="Bowman C."/>
            <person name="Fujii C."/>
            <person name="Garland S.A."/>
            <person name="Mason T.M."/>
            <person name="Olsen G.J."/>
            <person name="Fraser C.M."/>
            <person name="Smith H.O."/>
            <person name="Woese C.R."/>
            <person name="Venter J.C."/>
        </authorList>
    </citation>
    <scope>NUCLEOTIDE SEQUENCE [LARGE SCALE GENOMIC DNA]</scope>
    <source>
        <strain>ATCC 49558 / DSM 4304 / JCM 9628 / NBRC 100126 / VC-16</strain>
    </source>
</reference>
<proteinExistence type="predicted"/>
<protein>
    <recommendedName>
        <fullName>Uncharacterized protein AF_1870</fullName>
    </recommendedName>
</protein>